<protein>
    <recommendedName>
        <fullName evidence="6">Dermonecrotic toxin SdSicTox-betaIIB1aii</fullName>
        <ecNumber evidence="4">4.6.1.-</ecNumber>
    </recommendedName>
    <alternativeName>
        <fullName>Phospholipase D</fullName>
        <shortName>PLD</shortName>
    </alternativeName>
    <alternativeName>
        <fullName>Sphingomyelin phosphodiesterase D</fullName>
        <shortName>SMD</shortName>
        <shortName>SMase D</shortName>
        <shortName>Sphingomyelinase D</shortName>
    </alternativeName>
</protein>
<evidence type="ECO:0000250" key="1">
    <source>
        <dbReference type="UniProtKB" id="A0A0D4WTV1"/>
    </source>
</evidence>
<evidence type="ECO:0000250" key="2">
    <source>
        <dbReference type="UniProtKB" id="A0A0D4WV12"/>
    </source>
</evidence>
<evidence type="ECO:0000250" key="3">
    <source>
        <dbReference type="UniProtKB" id="P0CE80"/>
    </source>
</evidence>
<evidence type="ECO:0000250" key="4">
    <source>
        <dbReference type="UniProtKB" id="Q4ZFU2"/>
    </source>
</evidence>
<evidence type="ECO:0000250" key="5">
    <source>
        <dbReference type="UniProtKB" id="Q8I914"/>
    </source>
</evidence>
<evidence type="ECO:0000303" key="6">
    <source>
    </source>
</evidence>
<evidence type="ECO:0000305" key="7"/>
<evidence type="ECO:0000305" key="8">
    <source>
    </source>
</evidence>
<keyword id="KW-0204">Cytolysis</keyword>
<keyword id="KW-1061">Dermonecrotic toxin</keyword>
<keyword id="KW-1015">Disulfide bond</keyword>
<keyword id="KW-0354">Hemolysis</keyword>
<keyword id="KW-0442">Lipid degradation</keyword>
<keyword id="KW-0443">Lipid metabolism</keyword>
<keyword id="KW-0456">Lyase</keyword>
<keyword id="KW-0460">Magnesium</keyword>
<keyword id="KW-0479">Metal-binding</keyword>
<keyword id="KW-0964">Secreted</keyword>
<keyword id="KW-0800">Toxin</keyword>
<sequence>WIMGHMVNAIEQVDEFLNLGANAIEFDIDFDKDGIAQITHHGIPCDCGRKCTKKAIFTEYLDNIRQVTTPDDPKFREQLVLLALDLKLRRISSAKAYRAGEDVAKKLLDHYWQRGNSKARAYILLNIPLVEDYEFIRAFKDTLKNEGYESYNDKVGINFTGNEDLDKIRDVLEILGIHKQVWQADGITSCFARGTERLKEALKKRDTPGYNYINKVYAWTLVRKSIMRRSLRLGVDGVMSNNPDRVIKVLKEKEFADKFRLATYNDNPWEKFRG</sequence>
<accession>C0JB77</accession>
<reference key="1">
    <citation type="journal article" date="2009" name="Mol. Biol. Evol.">
        <title>Molecular evolution, functional variation, and proposed nomenclature of the gene family that includes sphingomyelinase D in sicariid spider venoms.</title>
        <authorList>
            <person name="Binford G.J."/>
            <person name="Bodner M.R."/>
            <person name="Cordes M.H."/>
            <person name="Baldwin K.L."/>
            <person name="Rynerson M.R."/>
            <person name="Burns S.N."/>
            <person name="Zobel-Thropp P.A."/>
        </authorList>
    </citation>
    <scope>NUCLEOTIDE SEQUENCE [MRNA]</scope>
    <scope>NOMENCLATURE</scope>
    <source>
        <tissue>Venom gland</tissue>
    </source>
</reference>
<dbReference type="EC" id="4.6.1.-" evidence="4"/>
<dbReference type="EMBL" id="FJ171512">
    <property type="protein sequence ID" value="ACN49008.1"/>
    <property type="molecule type" value="mRNA"/>
</dbReference>
<dbReference type="SMR" id="C0JB77"/>
<dbReference type="GO" id="GO:0005576">
    <property type="term" value="C:extracellular region"/>
    <property type="evidence" value="ECO:0007669"/>
    <property type="project" value="UniProtKB-SubCell"/>
</dbReference>
<dbReference type="GO" id="GO:0016829">
    <property type="term" value="F:lyase activity"/>
    <property type="evidence" value="ECO:0007669"/>
    <property type="project" value="UniProtKB-KW"/>
</dbReference>
<dbReference type="GO" id="GO:0046872">
    <property type="term" value="F:metal ion binding"/>
    <property type="evidence" value="ECO:0007669"/>
    <property type="project" value="UniProtKB-KW"/>
</dbReference>
<dbReference type="GO" id="GO:0008081">
    <property type="term" value="F:phosphoric diester hydrolase activity"/>
    <property type="evidence" value="ECO:0007669"/>
    <property type="project" value="InterPro"/>
</dbReference>
<dbReference type="GO" id="GO:0090729">
    <property type="term" value="F:toxin activity"/>
    <property type="evidence" value="ECO:0007669"/>
    <property type="project" value="UniProtKB-KW"/>
</dbReference>
<dbReference type="GO" id="GO:0031640">
    <property type="term" value="P:killing of cells of another organism"/>
    <property type="evidence" value="ECO:0007669"/>
    <property type="project" value="UniProtKB-KW"/>
</dbReference>
<dbReference type="GO" id="GO:0016042">
    <property type="term" value="P:lipid catabolic process"/>
    <property type="evidence" value="ECO:0007669"/>
    <property type="project" value="UniProtKB-KW"/>
</dbReference>
<dbReference type="CDD" id="cd08576">
    <property type="entry name" value="GDPD_like_SMaseD_PLD"/>
    <property type="match status" value="1"/>
</dbReference>
<dbReference type="Gene3D" id="3.20.20.190">
    <property type="entry name" value="Phosphatidylinositol (PI) phosphodiesterase"/>
    <property type="match status" value="1"/>
</dbReference>
<dbReference type="InterPro" id="IPR017946">
    <property type="entry name" value="PLC-like_Pdiesterase_TIM-brl"/>
</dbReference>
<dbReference type="SUPFAM" id="SSF51695">
    <property type="entry name" value="PLC-like phosphodiesterases"/>
    <property type="match status" value="1"/>
</dbReference>
<proteinExistence type="evidence at transcript level"/>
<comment type="function">
    <text evidence="1 3">Dermonecrotic toxins cleave the phosphodiester linkage between the phosphate and headgroup of certain phospholipids (sphingolipid and lysolipid substrates), forming an alcohol (often choline) and a cyclic phosphate (By similarity). This toxin acts on sphingomyelin (SM) (By similarity). It may also act on ceramide phosphoethanolamine (CPE), lysophosphatidylcholine (LPC) and lysophosphatidylethanolamine (LPE), but not on lysophosphatidylserine (LPS), and lysophosphatidylglycerol (LPG) (By similarity). It acts by transphosphatidylation, releasing exclusively cyclic phosphate products as second products (By similarity). Induces dermonecrosis, hemolysis, increased vascular permeability, edema, inflammatory response, and platelet aggregation (By similarity).</text>
</comment>
<comment type="catalytic activity">
    <reaction evidence="1">
        <text>an N-(acyl)-sphingosylphosphocholine = an N-(acyl)-sphingosyl-1,3-cyclic phosphate + choline</text>
        <dbReference type="Rhea" id="RHEA:60652"/>
        <dbReference type="ChEBI" id="CHEBI:15354"/>
        <dbReference type="ChEBI" id="CHEBI:64583"/>
        <dbReference type="ChEBI" id="CHEBI:143892"/>
    </reaction>
</comment>
<comment type="catalytic activity">
    <reaction evidence="1">
        <text>an N-(acyl)-sphingosylphosphoethanolamine = an N-(acyl)-sphingosyl-1,3-cyclic phosphate + ethanolamine</text>
        <dbReference type="Rhea" id="RHEA:60648"/>
        <dbReference type="ChEBI" id="CHEBI:57603"/>
        <dbReference type="ChEBI" id="CHEBI:143891"/>
        <dbReference type="ChEBI" id="CHEBI:143892"/>
    </reaction>
</comment>
<comment type="catalytic activity">
    <reaction evidence="1">
        <text>a 1-acyl-sn-glycero-3-phosphocholine = a 1-acyl-sn-glycero-2,3-cyclic phosphate + choline</text>
        <dbReference type="Rhea" id="RHEA:60700"/>
        <dbReference type="ChEBI" id="CHEBI:15354"/>
        <dbReference type="ChEBI" id="CHEBI:58168"/>
        <dbReference type="ChEBI" id="CHEBI:143947"/>
    </reaction>
</comment>
<comment type="catalytic activity">
    <reaction evidence="1">
        <text>a 1-acyl-sn-glycero-3-phosphoethanolamine = a 1-acyl-sn-glycero-2,3-cyclic phosphate + ethanolamine</text>
        <dbReference type="Rhea" id="RHEA:60704"/>
        <dbReference type="ChEBI" id="CHEBI:57603"/>
        <dbReference type="ChEBI" id="CHEBI:64381"/>
        <dbReference type="ChEBI" id="CHEBI:143947"/>
    </reaction>
</comment>
<comment type="cofactor">
    <cofactor evidence="5">
        <name>Mg(2+)</name>
        <dbReference type="ChEBI" id="CHEBI:18420"/>
    </cofactor>
    <text evidence="5">Binds 1 Mg(2+) ion per subunit.</text>
</comment>
<comment type="subcellular location">
    <subcellularLocation>
        <location evidence="8">Secreted</location>
    </subcellularLocation>
</comment>
<comment type="tissue specificity">
    <text evidence="8">Expressed by the venom gland.</text>
</comment>
<comment type="similarity">
    <text evidence="7">Belongs to the arthropod phospholipase D family. Class II subfamily.</text>
</comment>
<comment type="caution">
    <text evidence="1 2 4">The most common activity assay for dermonecrotic toxins detects enzymatic activity by monitoring choline release from substrate. Liberation of choline from sphingomyelin (SM) or lysophosphatidylcholine (LPC) is commonly assumed to result from substrate hydrolysis, giving either ceramide-1-phosphate (C1P) or lysophosphatidic acid (LPA), respectively, as a second product. However, two studies from Lajoie and colleagues (2013 and 2015) report the observation of exclusive formation of cyclic phosphate products as second products, resulting from intramolecular transphosphatidylation. Cyclic phosphates have vastly different biological properties from their monoester counterparts, and they may be relevant to the pathology of brown spider envenomation.</text>
</comment>
<feature type="chain" id="PRO_0000392883" description="Dermonecrotic toxin SdSicTox-betaIIB1aii">
    <location>
        <begin position="1" status="less than"/>
        <end position="274"/>
    </location>
</feature>
<feature type="active site" evidence="5">
    <location>
        <position position="5"/>
    </location>
</feature>
<feature type="active site" description="Nucleophile" evidence="5">
    <location>
        <position position="41"/>
    </location>
</feature>
<feature type="binding site" evidence="5">
    <location>
        <position position="25"/>
    </location>
    <ligand>
        <name>Mg(2+)</name>
        <dbReference type="ChEBI" id="CHEBI:18420"/>
    </ligand>
</feature>
<feature type="binding site" evidence="5">
    <location>
        <position position="27"/>
    </location>
    <ligand>
        <name>Mg(2+)</name>
        <dbReference type="ChEBI" id="CHEBI:18420"/>
    </ligand>
</feature>
<feature type="binding site" evidence="5">
    <location>
        <position position="85"/>
    </location>
    <ligand>
        <name>Mg(2+)</name>
        <dbReference type="ChEBI" id="CHEBI:18420"/>
    </ligand>
</feature>
<feature type="disulfide bond" evidence="3">
    <location>
        <begin position="45"/>
        <end position="51"/>
    </location>
</feature>
<feature type="disulfide bond" evidence="3">
    <location>
        <begin position="47"/>
        <end position="190"/>
    </location>
</feature>
<feature type="non-terminal residue">
    <location>
        <position position="1"/>
    </location>
</feature>
<name>B2KA2_SICCD</name>
<organism>
    <name type="scientific">Sicarius cf. damarensis (strain GJB-2008)</name>
    <name type="common">Six-eyed sand spider</name>
    <dbReference type="NCBI Taxonomy" id="575956"/>
    <lineage>
        <taxon>Eukaryota</taxon>
        <taxon>Metazoa</taxon>
        <taxon>Ecdysozoa</taxon>
        <taxon>Arthropoda</taxon>
        <taxon>Chelicerata</taxon>
        <taxon>Arachnida</taxon>
        <taxon>Araneae</taxon>
        <taxon>Araneomorphae</taxon>
        <taxon>Haplogynae</taxon>
        <taxon>Scytodoidea</taxon>
        <taxon>Sicariidae</taxon>
        <taxon>Sicarius</taxon>
    </lineage>
</organism>